<evidence type="ECO:0000250" key="1"/>
<evidence type="ECO:0000255" key="2">
    <source>
        <dbReference type="PROSITE-ProRule" id="PRU00609"/>
    </source>
</evidence>
<evidence type="ECO:0000256" key="3">
    <source>
        <dbReference type="SAM" id="MobiDB-lite"/>
    </source>
</evidence>
<evidence type="ECO:0000269" key="4">
    <source>
    </source>
</evidence>
<evidence type="ECO:0000269" key="5">
    <source>
    </source>
</evidence>
<evidence type="ECO:0000303" key="6">
    <source>
    </source>
</evidence>
<evidence type="ECO:0000305" key="7"/>
<evidence type="ECO:0000305" key="8">
    <source>
    </source>
</evidence>
<sequence length="546" mass="59520">MSAPQQQQQSQQKQQQHVRVVEQQQVEPAEAVTSSMESESISASKELTGLTHECGVFGAIACGDWPTQMDIAHVICLGLVALQHRGQESAGIATSEGKCSKNFNVHKGMGMISTLFNDDSMKKLRGNLGIGHTRYSTAGGSGVVNCQPFEVHTTHGALALAHNGELVNNESLRREVLARGVGLSTHSDSELIAQSLCCAPEDVSELDGPNWPARIRHFMMLAPLSYSLVIMLKDKIYAVRDTYGNRPLCIGKIVPINAGHGNNLDTPADGWVVSSESCGFLSIGARYVREVEPGEIVELSRSGYRTVDIVERPDFKRMAFCIFEYVYFARGDSIFEGQMVYTVRLQCGRQLWREAPVEADIVSSVPESGTAAAHGYARESGIEFAEVLCRNRYVGRTFIQPSTRLRQLGVAKKFGALSENVAGKRLVLIDDSIVRGNTIGPIIKLLRDAGAREVHIRIASPPLQYPCYMGINIPTREELIANKLNPDQLARHVGADSLAYLSVEGLVEAVQLKHRDAGDSKSKGTGHCTACLTGEYPGGLPDELSW</sequence>
<organism>
    <name type="scientific">Drosophila melanogaster</name>
    <name type="common">Fruit fly</name>
    <dbReference type="NCBI Taxonomy" id="7227"/>
    <lineage>
        <taxon>Eukaryota</taxon>
        <taxon>Metazoa</taxon>
        <taxon>Ecdysozoa</taxon>
        <taxon>Arthropoda</taxon>
        <taxon>Hexapoda</taxon>
        <taxon>Insecta</taxon>
        <taxon>Pterygota</taxon>
        <taxon>Neoptera</taxon>
        <taxon>Endopterygota</taxon>
        <taxon>Diptera</taxon>
        <taxon>Brachycera</taxon>
        <taxon>Muscomorpha</taxon>
        <taxon>Ephydroidea</taxon>
        <taxon>Drosophilidae</taxon>
        <taxon>Drosophila</taxon>
        <taxon>Sophophora</taxon>
    </lineage>
</organism>
<protein>
    <recommendedName>
        <fullName>Amidophosphoribosyltransferase</fullName>
        <shortName>ATase</shortName>
        <ecNumber evidence="8">2.4.2.14</ecNumber>
    </recommendedName>
    <alternativeName>
        <fullName>Glutamine phosphoribosylpyrophosphate amidotransferase</fullName>
        <shortName>GPAT</shortName>
    </alternativeName>
    <alternativeName>
        <fullName evidence="6">Phosphoribosylamidotransferase</fullName>
        <shortName evidence="6">PRAT</shortName>
    </alternativeName>
</protein>
<dbReference type="EC" id="2.4.2.14" evidence="8"/>
<dbReference type="EMBL" id="AF017096">
    <property type="protein sequence ID" value="AAC39084.1"/>
    <property type="status" value="ALT_INIT"/>
    <property type="molecule type" value="Genomic_DNA"/>
</dbReference>
<dbReference type="EMBL" id="AE014297">
    <property type="protein sequence ID" value="AAF54163.2"/>
    <property type="molecule type" value="Genomic_DNA"/>
</dbReference>
<dbReference type="EMBL" id="AY069652">
    <property type="protein sequence ID" value="AAL39797.1"/>
    <property type="molecule type" value="mRNA"/>
</dbReference>
<dbReference type="PIR" id="S47860">
    <property type="entry name" value="S47860"/>
</dbReference>
<dbReference type="RefSeq" id="NP_001246972.1">
    <property type="nucleotide sequence ID" value="NM_001260043.1"/>
</dbReference>
<dbReference type="RefSeq" id="NP_524271.2">
    <property type="nucleotide sequence ID" value="NM_079547.3"/>
</dbReference>
<dbReference type="SMR" id="Q27601"/>
<dbReference type="BioGRID" id="66121">
    <property type="interactions" value="2"/>
</dbReference>
<dbReference type="FunCoup" id="Q27601">
    <property type="interactions" value="1435"/>
</dbReference>
<dbReference type="STRING" id="7227.FBpp0293248"/>
<dbReference type="MEROPS" id="C44.001"/>
<dbReference type="iPTMnet" id="Q27601"/>
<dbReference type="PaxDb" id="7227-FBpp0081261"/>
<dbReference type="DNASU" id="40935"/>
<dbReference type="EnsemblMetazoa" id="FBtr0081764">
    <property type="protein sequence ID" value="FBpp0081261"/>
    <property type="gene ID" value="FBgn0004901"/>
</dbReference>
<dbReference type="EnsemblMetazoa" id="FBtr0304705">
    <property type="protein sequence ID" value="FBpp0293248"/>
    <property type="gene ID" value="FBgn0004901"/>
</dbReference>
<dbReference type="GeneID" id="40935"/>
<dbReference type="KEGG" id="dme:Dmel_CG2867"/>
<dbReference type="AGR" id="FB:FBgn0004901"/>
<dbReference type="CTD" id="40935"/>
<dbReference type="FlyBase" id="FBgn0004901">
    <property type="gene designation" value="Prat"/>
</dbReference>
<dbReference type="VEuPathDB" id="VectorBase:FBgn0004901"/>
<dbReference type="eggNOG" id="KOG0572">
    <property type="taxonomic scope" value="Eukaryota"/>
</dbReference>
<dbReference type="GeneTree" id="ENSGT00390000003428"/>
<dbReference type="HOGENOM" id="CLU_022389_3_1_1"/>
<dbReference type="InParanoid" id="Q27601"/>
<dbReference type="OMA" id="PINSGHA"/>
<dbReference type="OrthoDB" id="191723at2759"/>
<dbReference type="PhylomeDB" id="Q27601"/>
<dbReference type="Reactome" id="R-DME-73817">
    <property type="pathway name" value="Purine ribonucleoside monophosphate biosynthesis"/>
</dbReference>
<dbReference type="UniPathway" id="UPA00074">
    <property type="reaction ID" value="UER00124"/>
</dbReference>
<dbReference type="BioGRID-ORCS" id="40935">
    <property type="hits" value="1 hit in 3 CRISPR screens"/>
</dbReference>
<dbReference type="GenomeRNAi" id="40935"/>
<dbReference type="PRO" id="PR:Q27601"/>
<dbReference type="Proteomes" id="UP000000803">
    <property type="component" value="Chromosome 3R"/>
</dbReference>
<dbReference type="Bgee" id="FBgn0004901">
    <property type="expression patterns" value="Expressed in adult abdomen and 49 other cell types or tissues"/>
</dbReference>
<dbReference type="ExpressionAtlas" id="Q27601">
    <property type="expression patterns" value="baseline and differential"/>
</dbReference>
<dbReference type="GO" id="GO:0051539">
    <property type="term" value="F:4 iron, 4 sulfur cluster binding"/>
    <property type="evidence" value="ECO:0007669"/>
    <property type="project" value="UniProtKB-KW"/>
</dbReference>
<dbReference type="GO" id="GO:0004044">
    <property type="term" value="F:amidophosphoribosyltransferase activity"/>
    <property type="evidence" value="ECO:0000315"/>
    <property type="project" value="FlyBase"/>
</dbReference>
<dbReference type="GO" id="GO:0046872">
    <property type="term" value="F:metal ion binding"/>
    <property type="evidence" value="ECO:0007669"/>
    <property type="project" value="UniProtKB-KW"/>
</dbReference>
<dbReference type="GO" id="GO:0006189">
    <property type="term" value="P:'de novo' IMP biosynthetic process"/>
    <property type="evidence" value="ECO:0007669"/>
    <property type="project" value="UniProtKB-UniPathway"/>
</dbReference>
<dbReference type="GO" id="GO:0008340">
    <property type="term" value="P:determination of adult lifespan"/>
    <property type="evidence" value="ECO:0000315"/>
    <property type="project" value="FlyBase"/>
</dbReference>
<dbReference type="GO" id="GO:0040016">
    <property type="term" value="P:embryonic cleavage"/>
    <property type="evidence" value="ECO:0000315"/>
    <property type="project" value="FlyBase"/>
</dbReference>
<dbReference type="GO" id="GO:0048477">
    <property type="term" value="P:oogenesis"/>
    <property type="evidence" value="ECO:0000315"/>
    <property type="project" value="FlyBase"/>
</dbReference>
<dbReference type="GO" id="GO:0009113">
    <property type="term" value="P:purine nucleobase biosynthetic process"/>
    <property type="evidence" value="ECO:0007669"/>
    <property type="project" value="InterPro"/>
</dbReference>
<dbReference type="GO" id="GO:0006164">
    <property type="term" value="P:purine nucleotide biosynthetic process"/>
    <property type="evidence" value="ECO:0000315"/>
    <property type="project" value="UniProtKB"/>
</dbReference>
<dbReference type="CDD" id="cd00715">
    <property type="entry name" value="GPATase_N"/>
    <property type="match status" value="1"/>
</dbReference>
<dbReference type="CDD" id="cd06223">
    <property type="entry name" value="PRTases_typeI"/>
    <property type="match status" value="1"/>
</dbReference>
<dbReference type="FunFam" id="3.60.20.10:FF:000047">
    <property type="entry name" value="Amidophosphoribosyltransferase"/>
    <property type="match status" value="1"/>
</dbReference>
<dbReference type="Gene3D" id="3.40.50.2020">
    <property type="match status" value="1"/>
</dbReference>
<dbReference type="Gene3D" id="3.60.20.10">
    <property type="entry name" value="Glutamine Phosphoribosylpyrophosphate, subunit 1, domain 1"/>
    <property type="match status" value="1"/>
</dbReference>
<dbReference type="HAMAP" id="MF_01931">
    <property type="entry name" value="PurF"/>
    <property type="match status" value="1"/>
</dbReference>
<dbReference type="InterPro" id="IPR017932">
    <property type="entry name" value="GATase_2_dom"/>
</dbReference>
<dbReference type="InterPro" id="IPR029055">
    <property type="entry name" value="Ntn_hydrolases_N"/>
</dbReference>
<dbReference type="InterPro" id="IPR000836">
    <property type="entry name" value="PRibTrfase_dom"/>
</dbReference>
<dbReference type="InterPro" id="IPR029057">
    <property type="entry name" value="PRTase-like"/>
</dbReference>
<dbReference type="InterPro" id="IPR005854">
    <property type="entry name" value="PurF"/>
</dbReference>
<dbReference type="InterPro" id="IPR035584">
    <property type="entry name" value="PurF_N"/>
</dbReference>
<dbReference type="NCBIfam" id="TIGR01134">
    <property type="entry name" value="purF"/>
    <property type="match status" value="1"/>
</dbReference>
<dbReference type="PANTHER" id="PTHR11907">
    <property type="entry name" value="AMIDOPHOSPHORIBOSYLTRANSFERASE"/>
    <property type="match status" value="1"/>
</dbReference>
<dbReference type="Pfam" id="PF13522">
    <property type="entry name" value="GATase_6"/>
    <property type="match status" value="1"/>
</dbReference>
<dbReference type="PIRSF" id="PIRSF000485">
    <property type="entry name" value="Amd_phspho_trans"/>
    <property type="match status" value="1"/>
</dbReference>
<dbReference type="SUPFAM" id="SSF56235">
    <property type="entry name" value="N-terminal nucleophile aminohydrolases (Ntn hydrolases)"/>
    <property type="match status" value="1"/>
</dbReference>
<dbReference type="SUPFAM" id="SSF53271">
    <property type="entry name" value="PRTase-like"/>
    <property type="match status" value="1"/>
</dbReference>
<dbReference type="PROSITE" id="PS51278">
    <property type="entry name" value="GATASE_TYPE_2"/>
    <property type="match status" value="1"/>
</dbReference>
<dbReference type="PROSITE" id="PS00103">
    <property type="entry name" value="PUR_PYR_PR_TRANSFER"/>
    <property type="match status" value="1"/>
</dbReference>
<reference key="1">
    <citation type="journal article" date="1994" name="Genetics">
        <title>Molecular and genetic analyses of Drosophila Prat, which encodes the first enzyme of de novo purine biosynthesis.</title>
        <authorList>
            <person name="Clark D.V."/>
        </authorList>
    </citation>
    <scope>NUCLEOTIDE SEQUENCE [GENOMIC DNA]</scope>
    <scope>FUNCTION</scope>
    <scope>CATALYTIC ACTIVITY</scope>
    <scope>PATHWAY</scope>
    <scope>DISRUPTION PHENOTYPE</scope>
</reference>
<reference key="2">
    <citation type="journal article" date="2000" name="Science">
        <title>The genome sequence of Drosophila melanogaster.</title>
        <authorList>
            <person name="Adams M.D."/>
            <person name="Celniker S.E."/>
            <person name="Holt R.A."/>
            <person name="Evans C.A."/>
            <person name="Gocayne J.D."/>
            <person name="Amanatides P.G."/>
            <person name="Scherer S.E."/>
            <person name="Li P.W."/>
            <person name="Hoskins R.A."/>
            <person name="Galle R.F."/>
            <person name="George R.A."/>
            <person name="Lewis S.E."/>
            <person name="Richards S."/>
            <person name="Ashburner M."/>
            <person name="Henderson S.N."/>
            <person name="Sutton G.G."/>
            <person name="Wortman J.R."/>
            <person name="Yandell M.D."/>
            <person name="Zhang Q."/>
            <person name="Chen L.X."/>
            <person name="Brandon R.C."/>
            <person name="Rogers Y.-H.C."/>
            <person name="Blazej R.G."/>
            <person name="Champe M."/>
            <person name="Pfeiffer B.D."/>
            <person name="Wan K.H."/>
            <person name="Doyle C."/>
            <person name="Baxter E.G."/>
            <person name="Helt G."/>
            <person name="Nelson C.R."/>
            <person name="Miklos G.L.G."/>
            <person name="Abril J.F."/>
            <person name="Agbayani A."/>
            <person name="An H.-J."/>
            <person name="Andrews-Pfannkoch C."/>
            <person name="Baldwin D."/>
            <person name="Ballew R.M."/>
            <person name="Basu A."/>
            <person name="Baxendale J."/>
            <person name="Bayraktaroglu L."/>
            <person name="Beasley E.M."/>
            <person name="Beeson K.Y."/>
            <person name="Benos P.V."/>
            <person name="Berman B.P."/>
            <person name="Bhandari D."/>
            <person name="Bolshakov S."/>
            <person name="Borkova D."/>
            <person name="Botchan M.R."/>
            <person name="Bouck J."/>
            <person name="Brokstein P."/>
            <person name="Brottier P."/>
            <person name="Burtis K.C."/>
            <person name="Busam D.A."/>
            <person name="Butler H."/>
            <person name="Cadieu E."/>
            <person name="Center A."/>
            <person name="Chandra I."/>
            <person name="Cherry J.M."/>
            <person name="Cawley S."/>
            <person name="Dahlke C."/>
            <person name="Davenport L.B."/>
            <person name="Davies P."/>
            <person name="de Pablos B."/>
            <person name="Delcher A."/>
            <person name="Deng Z."/>
            <person name="Mays A.D."/>
            <person name="Dew I."/>
            <person name="Dietz S.M."/>
            <person name="Dodson K."/>
            <person name="Doup L.E."/>
            <person name="Downes M."/>
            <person name="Dugan-Rocha S."/>
            <person name="Dunkov B.C."/>
            <person name="Dunn P."/>
            <person name="Durbin K.J."/>
            <person name="Evangelista C.C."/>
            <person name="Ferraz C."/>
            <person name="Ferriera S."/>
            <person name="Fleischmann W."/>
            <person name="Fosler C."/>
            <person name="Gabrielian A.E."/>
            <person name="Garg N.S."/>
            <person name="Gelbart W.M."/>
            <person name="Glasser K."/>
            <person name="Glodek A."/>
            <person name="Gong F."/>
            <person name="Gorrell J.H."/>
            <person name="Gu Z."/>
            <person name="Guan P."/>
            <person name="Harris M."/>
            <person name="Harris N.L."/>
            <person name="Harvey D.A."/>
            <person name="Heiman T.J."/>
            <person name="Hernandez J.R."/>
            <person name="Houck J."/>
            <person name="Hostin D."/>
            <person name="Houston K.A."/>
            <person name="Howland T.J."/>
            <person name="Wei M.-H."/>
            <person name="Ibegwam C."/>
            <person name="Jalali M."/>
            <person name="Kalush F."/>
            <person name="Karpen G.H."/>
            <person name="Ke Z."/>
            <person name="Kennison J.A."/>
            <person name="Ketchum K.A."/>
            <person name="Kimmel B.E."/>
            <person name="Kodira C.D."/>
            <person name="Kraft C.L."/>
            <person name="Kravitz S."/>
            <person name="Kulp D."/>
            <person name="Lai Z."/>
            <person name="Lasko P."/>
            <person name="Lei Y."/>
            <person name="Levitsky A.A."/>
            <person name="Li J.H."/>
            <person name="Li Z."/>
            <person name="Liang Y."/>
            <person name="Lin X."/>
            <person name="Liu X."/>
            <person name="Mattei B."/>
            <person name="McIntosh T.C."/>
            <person name="McLeod M.P."/>
            <person name="McPherson D."/>
            <person name="Merkulov G."/>
            <person name="Milshina N.V."/>
            <person name="Mobarry C."/>
            <person name="Morris J."/>
            <person name="Moshrefi A."/>
            <person name="Mount S.M."/>
            <person name="Moy M."/>
            <person name="Murphy B."/>
            <person name="Murphy L."/>
            <person name="Muzny D.M."/>
            <person name="Nelson D.L."/>
            <person name="Nelson D.R."/>
            <person name="Nelson K.A."/>
            <person name="Nixon K."/>
            <person name="Nusskern D.R."/>
            <person name="Pacleb J.M."/>
            <person name="Palazzolo M."/>
            <person name="Pittman G.S."/>
            <person name="Pan S."/>
            <person name="Pollard J."/>
            <person name="Puri V."/>
            <person name="Reese M.G."/>
            <person name="Reinert K."/>
            <person name="Remington K."/>
            <person name="Saunders R.D.C."/>
            <person name="Scheeler F."/>
            <person name="Shen H."/>
            <person name="Shue B.C."/>
            <person name="Siden-Kiamos I."/>
            <person name="Simpson M."/>
            <person name="Skupski M.P."/>
            <person name="Smith T.J."/>
            <person name="Spier E."/>
            <person name="Spradling A.C."/>
            <person name="Stapleton M."/>
            <person name="Strong R."/>
            <person name="Sun E."/>
            <person name="Svirskas R."/>
            <person name="Tector C."/>
            <person name="Turner R."/>
            <person name="Venter E."/>
            <person name="Wang A.H."/>
            <person name="Wang X."/>
            <person name="Wang Z.-Y."/>
            <person name="Wassarman D.A."/>
            <person name="Weinstock G.M."/>
            <person name="Weissenbach J."/>
            <person name="Williams S.M."/>
            <person name="Woodage T."/>
            <person name="Worley K.C."/>
            <person name="Wu D."/>
            <person name="Yang S."/>
            <person name="Yao Q.A."/>
            <person name="Ye J."/>
            <person name="Yeh R.-F."/>
            <person name="Zaveri J.S."/>
            <person name="Zhan M."/>
            <person name="Zhang G."/>
            <person name="Zhao Q."/>
            <person name="Zheng L."/>
            <person name="Zheng X.H."/>
            <person name="Zhong F.N."/>
            <person name="Zhong W."/>
            <person name="Zhou X."/>
            <person name="Zhu S.C."/>
            <person name="Zhu X."/>
            <person name="Smith H.O."/>
            <person name="Gibbs R.A."/>
            <person name="Myers E.W."/>
            <person name="Rubin G.M."/>
            <person name="Venter J.C."/>
        </authorList>
    </citation>
    <scope>NUCLEOTIDE SEQUENCE [LARGE SCALE GENOMIC DNA]</scope>
    <source>
        <strain>Berkeley</strain>
    </source>
</reference>
<reference key="3">
    <citation type="journal article" date="2002" name="Genome Biol.">
        <title>Annotation of the Drosophila melanogaster euchromatic genome: a systematic review.</title>
        <authorList>
            <person name="Misra S."/>
            <person name="Crosby M.A."/>
            <person name="Mungall C.J."/>
            <person name="Matthews B.B."/>
            <person name="Campbell K.S."/>
            <person name="Hradecky P."/>
            <person name="Huang Y."/>
            <person name="Kaminker J.S."/>
            <person name="Millburn G.H."/>
            <person name="Prochnik S.E."/>
            <person name="Smith C.D."/>
            <person name="Tupy J.L."/>
            <person name="Whitfield E.J."/>
            <person name="Bayraktaroglu L."/>
            <person name="Berman B.P."/>
            <person name="Bettencourt B.R."/>
            <person name="Celniker S.E."/>
            <person name="de Grey A.D.N.J."/>
            <person name="Drysdale R.A."/>
            <person name="Harris N.L."/>
            <person name="Richter J."/>
            <person name="Russo S."/>
            <person name="Schroeder A.J."/>
            <person name="Shu S.Q."/>
            <person name="Stapleton M."/>
            <person name="Yamada C."/>
            <person name="Ashburner M."/>
            <person name="Gelbart W.M."/>
            <person name="Rubin G.M."/>
            <person name="Lewis S.E."/>
        </authorList>
    </citation>
    <scope>GENOME REANNOTATION</scope>
    <source>
        <strain>Berkeley</strain>
    </source>
</reference>
<reference key="4">
    <citation type="journal article" date="2002" name="Genome Biol.">
        <title>A Drosophila full-length cDNA resource.</title>
        <authorList>
            <person name="Stapleton M."/>
            <person name="Carlson J.W."/>
            <person name="Brokstein P."/>
            <person name="Yu C."/>
            <person name="Champe M."/>
            <person name="George R.A."/>
            <person name="Guarin H."/>
            <person name="Kronmiller B."/>
            <person name="Pacleb J.M."/>
            <person name="Park S."/>
            <person name="Wan K.H."/>
            <person name="Rubin G.M."/>
            <person name="Celniker S.E."/>
        </authorList>
    </citation>
    <scope>NUCLEOTIDE SEQUENCE [LARGE SCALE MRNA]</scope>
    <source>
        <strain>Berkeley</strain>
        <tissue>Embryo</tissue>
    </source>
</reference>
<reference key="5">
    <citation type="journal article" date="2008" name="J. Proteome Res.">
        <title>Phosphoproteome analysis of Drosophila melanogaster embryos.</title>
        <authorList>
            <person name="Zhai B."/>
            <person name="Villen J."/>
            <person name="Beausoleil S.A."/>
            <person name="Mintseris J."/>
            <person name="Gygi S.P."/>
        </authorList>
    </citation>
    <scope>PHOSPHORYLATION [LARGE SCALE ANALYSIS] AT SER-113; THR-114 AND SER-120</scope>
    <scope>IDENTIFICATION BY MASS SPECTROMETRY</scope>
    <source>
        <tissue>Embryo</tissue>
    </source>
</reference>
<keyword id="KW-0004">4Fe-4S</keyword>
<keyword id="KW-0315">Glutamine amidotransferase</keyword>
<keyword id="KW-0328">Glycosyltransferase</keyword>
<keyword id="KW-0408">Iron</keyword>
<keyword id="KW-0411">Iron-sulfur</keyword>
<keyword id="KW-0460">Magnesium</keyword>
<keyword id="KW-0479">Metal-binding</keyword>
<keyword id="KW-0597">Phosphoprotein</keyword>
<keyword id="KW-0658">Purine biosynthesis</keyword>
<keyword id="KW-1185">Reference proteome</keyword>
<keyword id="KW-0808">Transferase</keyword>
<name>PUR1_DROME</name>
<gene>
    <name type="primary">Prat</name>
    <name type="ORF">CG2867</name>
</gene>
<feature type="propeptide" id="PRO_0000029287" evidence="7">
    <location>
        <begin position="1"/>
        <end position="53"/>
    </location>
</feature>
<feature type="chain" id="PRO_0000029288" description="Amidophosphoribosyltransferase">
    <location>
        <begin position="54"/>
        <end position="546"/>
    </location>
</feature>
<feature type="domain" description="Glutamine amidotransferase type-2" evidence="2">
    <location>
        <begin position="54"/>
        <end position="302"/>
    </location>
</feature>
<feature type="region of interest" description="Disordered" evidence="3">
    <location>
        <begin position="1"/>
        <end position="39"/>
    </location>
</feature>
<feature type="compositionally biased region" description="Low complexity" evidence="3">
    <location>
        <begin position="1"/>
        <end position="26"/>
    </location>
</feature>
<feature type="active site" description="Nucleophile" evidence="2">
    <location>
        <position position="54"/>
    </location>
</feature>
<feature type="binding site" evidence="1">
    <location>
        <position position="321"/>
    </location>
    <ligand>
        <name>[4Fe-4S] cluster</name>
        <dbReference type="ChEBI" id="CHEBI:49883"/>
    </ligand>
</feature>
<feature type="binding site" evidence="1">
    <location>
        <position position="368"/>
    </location>
    <ligand>
        <name>Mg(2+)</name>
        <dbReference type="ChEBI" id="CHEBI:18420"/>
    </ligand>
</feature>
<feature type="binding site" evidence="1">
    <location>
        <position position="430"/>
    </location>
    <ligand>
        <name>Mg(2+)</name>
        <dbReference type="ChEBI" id="CHEBI:18420"/>
    </ligand>
</feature>
<feature type="binding site" evidence="1">
    <location>
        <position position="431"/>
    </location>
    <ligand>
        <name>Mg(2+)</name>
        <dbReference type="ChEBI" id="CHEBI:18420"/>
    </ligand>
</feature>
<feature type="binding site" evidence="1">
    <location>
        <position position="467"/>
    </location>
    <ligand>
        <name>[4Fe-4S] cluster</name>
        <dbReference type="ChEBI" id="CHEBI:49883"/>
    </ligand>
</feature>
<feature type="binding site" evidence="1">
    <location>
        <position position="528"/>
    </location>
    <ligand>
        <name>[4Fe-4S] cluster</name>
        <dbReference type="ChEBI" id="CHEBI:49883"/>
    </ligand>
</feature>
<feature type="binding site" evidence="1">
    <location>
        <position position="531"/>
    </location>
    <ligand>
        <name>[4Fe-4S] cluster</name>
        <dbReference type="ChEBI" id="CHEBI:49883"/>
    </ligand>
</feature>
<feature type="modified residue" description="Phosphoserine" evidence="4">
    <location>
        <position position="113"/>
    </location>
</feature>
<feature type="modified residue" description="Phosphothreonine" evidence="4">
    <location>
        <position position="114"/>
    </location>
</feature>
<feature type="modified residue" description="Phosphoserine" evidence="4">
    <location>
        <position position="120"/>
    </location>
</feature>
<feature type="sequence conflict" description="In Ref. 1; AAC39084." evidence="7" ref="1">
    <original>E</original>
    <variation>V</variation>
    <location>
        <position position="150"/>
    </location>
</feature>
<feature type="sequence conflict" description="In Ref. 1; AAC39084." evidence="7" ref="1">
    <original>T</original>
    <variation>S</variation>
    <location>
        <position position="185"/>
    </location>
</feature>
<comment type="function">
    <text evidence="5">Involved in the first step (and regulatory point) of the de novo biosynthesis of purine nucleotides, where it catalyzes the transfer of glutamine amide to 5-phospho-alpha-D-ribose 1-diphosphate.</text>
</comment>
<comment type="catalytic activity">
    <reaction evidence="8">
        <text>5-phospho-beta-D-ribosylamine + L-glutamate + diphosphate = 5-phospho-alpha-D-ribose 1-diphosphate + L-glutamine + H2O</text>
        <dbReference type="Rhea" id="RHEA:14905"/>
        <dbReference type="ChEBI" id="CHEBI:15377"/>
        <dbReference type="ChEBI" id="CHEBI:29985"/>
        <dbReference type="ChEBI" id="CHEBI:33019"/>
        <dbReference type="ChEBI" id="CHEBI:58017"/>
        <dbReference type="ChEBI" id="CHEBI:58359"/>
        <dbReference type="ChEBI" id="CHEBI:58681"/>
        <dbReference type="EC" id="2.4.2.14"/>
    </reaction>
    <physiologicalReaction direction="right-to-left" evidence="8">
        <dbReference type="Rhea" id="RHEA:14907"/>
    </physiologicalReaction>
</comment>
<comment type="cofactor">
    <cofactor evidence="1">
        <name>Mg(2+)</name>
        <dbReference type="ChEBI" id="CHEBI:18420"/>
    </cofactor>
    <text evidence="1">Binds 1 Mg(2+) ion per subunit.</text>
</comment>
<comment type="cofactor">
    <cofactor evidence="1">
        <name>[4Fe-4S] cluster</name>
        <dbReference type="ChEBI" id="CHEBI:49883"/>
    </cofactor>
    <text evidence="1">Binds 1 [4Fe-4S] cluster per subunit.</text>
</comment>
<comment type="pathway">
    <text evidence="8">Purine metabolism; IMP biosynthesis via de novo pathway; N(1)-(5-phospho-D-ribosyl)glycinamide from 5-phospho-alpha-D-ribose 1-diphosphate: step 1/2.</text>
</comment>
<comment type="disruption phenotype">
    <text evidence="5">Reduction in viability and frequent wing defects.</text>
</comment>
<comment type="similarity">
    <text evidence="7">In the C-terminal section; belongs to the purine/pyrimidine phosphoribosyltransferase family.</text>
</comment>
<comment type="sequence caution" evidence="7">
    <conflict type="erroneous initiation">
        <sequence resource="EMBL-CDS" id="AAC39084"/>
    </conflict>
</comment>
<accession>Q27601</accession>
<accession>Q8T009</accession>
<accession>Q9VHY4</accession>
<proteinExistence type="evidence at protein level"/>